<reference key="1">
    <citation type="journal article" date="2002" name="Nature">
        <title>The genome sequence of Schizosaccharomyces pombe.</title>
        <authorList>
            <person name="Wood V."/>
            <person name="Gwilliam R."/>
            <person name="Rajandream M.A."/>
            <person name="Lyne M.H."/>
            <person name="Lyne R."/>
            <person name="Stewart A."/>
            <person name="Sgouros J.G."/>
            <person name="Peat N."/>
            <person name="Hayles J."/>
            <person name="Baker S.G."/>
            <person name="Basham D."/>
            <person name="Bowman S."/>
            <person name="Brooks K."/>
            <person name="Brown D."/>
            <person name="Brown S."/>
            <person name="Chillingworth T."/>
            <person name="Churcher C.M."/>
            <person name="Collins M."/>
            <person name="Connor R."/>
            <person name="Cronin A."/>
            <person name="Davis P."/>
            <person name="Feltwell T."/>
            <person name="Fraser A."/>
            <person name="Gentles S."/>
            <person name="Goble A."/>
            <person name="Hamlin N."/>
            <person name="Harris D.E."/>
            <person name="Hidalgo J."/>
            <person name="Hodgson G."/>
            <person name="Holroyd S."/>
            <person name="Hornsby T."/>
            <person name="Howarth S."/>
            <person name="Huckle E.J."/>
            <person name="Hunt S."/>
            <person name="Jagels K."/>
            <person name="James K.D."/>
            <person name="Jones L."/>
            <person name="Jones M."/>
            <person name="Leather S."/>
            <person name="McDonald S."/>
            <person name="McLean J."/>
            <person name="Mooney P."/>
            <person name="Moule S."/>
            <person name="Mungall K.L."/>
            <person name="Murphy L.D."/>
            <person name="Niblett D."/>
            <person name="Odell C."/>
            <person name="Oliver K."/>
            <person name="O'Neil S."/>
            <person name="Pearson D."/>
            <person name="Quail M.A."/>
            <person name="Rabbinowitsch E."/>
            <person name="Rutherford K.M."/>
            <person name="Rutter S."/>
            <person name="Saunders D."/>
            <person name="Seeger K."/>
            <person name="Sharp S."/>
            <person name="Skelton J."/>
            <person name="Simmonds M.N."/>
            <person name="Squares R."/>
            <person name="Squares S."/>
            <person name="Stevens K."/>
            <person name="Taylor K."/>
            <person name="Taylor R.G."/>
            <person name="Tivey A."/>
            <person name="Walsh S.V."/>
            <person name="Warren T."/>
            <person name="Whitehead S."/>
            <person name="Woodward J.R."/>
            <person name="Volckaert G."/>
            <person name="Aert R."/>
            <person name="Robben J."/>
            <person name="Grymonprez B."/>
            <person name="Weltjens I."/>
            <person name="Vanstreels E."/>
            <person name="Rieger M."/>
            <person name="Schaefer M."/>
            <person name="Mueller-Auer S."/>
            <person name="Gabel C."/>
            <person name="Fuchs M."/>
            <person name="Duesterhoeft A."/>
            <person name="Fritzc C."/>
            <person name="Holzer E."/>
            <person name="Moestl D."/>
            <person name="Hilbert H."/>
            <person name="Borzym K."/>
            <person name="Langer I."/>
            <person name="Beck A."/>
            <person name="Lehrach H."/>
            <person name="Reinhardt R."/>
            <person name="Pohl T.M."/>
            <person name="Eger P."/>
            <person name="Zimmermann W."/>
            <person name="Wedler H."/>
            <person name="Wambutt R."/>
            <person name="Purnelle B."/>
            <person name="Goffeau A."/>
            <person name="Cadieu E."/>
            <person name="Dreano S."/>
            <person name="Gloux S."/>
            <person name="Lelaure V."/>
            <person name="Mottier S."/>
            <person name="Galibert F."/>
            <person name="Aves S.J."/>
            <person name="Xiang Z."/>
            <person name="Hunt C."/>
            <person name="Moore K."/>
            <person name="Hurst S.M."/>
            <person name="Lucas M."/>
            <person name="Rochet M."/>
            <person name="Gaillardin C."/>
            <person name="Tallada V.A."/>
            <person name="Garzon A."/>
            <person name="Thode G."/>
            <person name="Daga R.R."/>
            <person name="Cruzado L."/>
            <person name="Jimenez J."/>
            <person name="Sanchez M."/>
            <person name="del Rey F."/>
            <person name="Benito J."/>
            <person name="Dominguez A."/>
            <person name="Revuelta J.L."/>
            <person name="Moreno S."/>
            <person name="Armstrong J."/>
            <person name="Forsburg S.L."/>
            <person name="Cerutti L."/>
            <person name="Lowe T."/>
            <person name="McCombie W.R."/>
            <person name="Paulsen I."/>
            <person name="Potashkin J."/>
            <person name="Shpakovski G.V."/>
            <person name="Ussery D."/>
            <person name="Barrell B.G."/>
            <person name="Nurse P."/>
        </authorList>
    </citation>
    <scope>NUCLEOTIDE SEQUENCE [LARGE SCALE GENOMIC DNA]</scope>
    <source>
        <strain>972 / ATCC 24843</strain>
    </source>
</reference>
<reference key="2">
    <citation type="journal article" date="2006" name="Nat. Biotechnol.">
        <title>ORFeome cloning and global analysis of protein localization in the fission yeast Schizosaccharomyces pombe.</title>
        <authorList>
            <person name="Matsuyama A."/>
            <person name="Arai R."/>
            <person name="Yashiroda Y."/>
            <person name="Shirai A."/>
            <person name="Kamata A."/>
            <person name="Sekido S."/>
            <person name="Kobayashi Y."/>
            <person name="Hashimoto A."/>
            <person name="Hamamoto M."/>
            <person name="Hiraoka Y."/>
            <person name="Horinouchi S."/>
            <person name="Yoshida M."/>
        </authorList>
    </citation>
    <scope>SUBCELLULAR LOCATION [LARGE SCALE ANALYSIS]</scope>
</reference>
<reference key="3">
    <citation type="journal article" date="2007" name="Genes Dev.">
        <title>Ubiquitylation of histone H2B controls RNA polymerase II transcription elongation independently of histone H3 methylation.</title>
        <authorList>
            <person name="Tanny J.C."/>
            <person name="Erdjument-Bromage H."/>
            <person name="Tempst P."/>
            <person name="Allis C.D."/>
        </authorList>
    </citation>
    <scope>FUNCTION</scope>
</reference>
<reference key="4">
    <citation type="journal article" date="2007" name="J. Biol. Chem.">
        <title>HULC, a histone H2B ubiquitinating complex, modulates heterochromatin independent of histone methylation in fission yeast.</title>
        <authorList>
            <person name="Zofall M."/>
            <person name="Grewal S.I.S."/>
        </authorList>
    </citation>
    <scope>IDENTIFICATION IN THE HULC COMPLEX</scope>
    <scope>FUNCTION OF THE HULC COMPLEX</scope>
    <scope>IDENTIFICATION BY MASS SPECTROMETRY</scope>
</reference>
<proteinExistence type="evidence at protein level"/>
<name>BRL1_SCHPO</name>
<comment type="function">
    <text evidence="4 5">E3 ubiquitin-protein ligase which belongs to the histone H2B ubiquitin ligase complex (HULC) which mediates monoubiquitination of histone H2B to form H2BK123ub1. H2BK123ub1 gives a specific tag for epigenetic transcriptional activation and is also a prerequisite for H3K4me and H3K79me formation.</text>
</comment>
<comment type="catalytic activity">
    <reaction evidence="6">
        <text>S-ubiquitinyl-[E2 ubiquitin-conjugating enzyme]-L-cysteine + [acceptor protein]-L-lysine = [E2 ubiquitin-conjugating enzyme]-L-cysteine + N(6)-ubiquitinyl-[acceptor protein]-L-lysine.</text>
        <dbReference type="EC" id="2.3.2.27"/>
    </reaction>
</comment>
<comment type="pathway">
    <text>Protein modification; protein ubiquitination.</text>
</comment>
<comment type="subunit">
    <text evidence="4">Component of the histone H2B ubiquitin ligase complex (HULC) composed of at least brl1, brl2, rhp6 and shf1.</text>
</comment>
<comment type="subcellular location">
    <subcellularLocation>
        <location evidence="3">Nucleus</location>
    </subcellularLocation>
</comment>
<comment type="similarity">
    <text evidence="6">Belongs to the BRE1 family.</text>
</comment>
<organism>
    <name type="scientific">Schizosaccharomyces pombe (strain 972 / ATCC 24843)</name>
    <name type="common">Fission yeast</name>
    <dbReference type="NCBI Taxonomy" id="284812"/>
    <lineage>
        <taxon>Eukaryota</taxon>
        <taxon>Fungi</taxon>
        <taxon>Dikarya</taxon>
        <taxon>Ascomycota</taxon>
        <taxon>Taphrinomycotina</taxon>
        <taxon>Schizosaccharomycetes</taxon>
        <taxon>Schizosaccharomycetales</taxon>
        <taxon>Schizosaccharomycetaceae</taxon>
        <taxon>Schizosaccharomyces</taxon>
    </lineage>
</organism>
<feature type="chain" id="PRO_0000352846" description="E3 ubiquitin-protein ligase brl1">
    <location>
        <begin position="1"/>
        <end position="692"/>
    </location>
</feature>
<feature type="zinc finger region" description="RING-type" evidence="2">
    <location>
        <begin position="639"/>
        <end position="679"/>
    </location>
</feature>
<feature type="coiled-coil region" evidence="1">
    <location>
        <begin position="302"/>
        <end position="370"/>
    </location>
</feature>
<sequence length="692" mass="80723">MSVVNESRKRRRLIHSEKETRRLDLGEEDDLELFQKEAAWRRSREYEHLTVLEKKLYEYWESLVLKLDHYVAAALENHEQSFEELEKITASLYQPDDNLQTLDLSLAEFSLIKDAQNYLNKYASYFQAHEPTLQKLAKFGSFKLKETPNVHEWIDQRQVHFTSMINYRTSQLKLALLKRKLSFFREALNSAELEWKRVQQDQLTSASERSIENIADDIPASEPKAILENGEGCLNDNDNISKLKNNFQSQADLMQANINSKLDELSQKSTRAAQLYVDIMGITDERVSREPHYLELKGVLSSNEEKIESINRDLSSLFEDIQFFISQRTKRQKDIIDLKLACVKEKQQLIKTLESSLTQIRNERDSLVAKQQMQYTNNLFFDDMMLLLSNLSNARVAILEGYSNRLCIWDRIERSKTGEMNNVLDEKEEISASSALEKLIKNNSCLEAELPSMYAAFDQSQSRLLKKYEELETKEKKALEMHYEKARATQKYFAAMKARDILMTEKKTLKLAENKEHDYIGKLQEREHALTKYESSLKAELEVYKQIKEIYGKHSVEVLTEDKHLQVKQTKLTQKLEDLIESVQKSGEKLMIMHQKLFHLQEEHTILSIKASYNKKESHLINQAYETQEAQVYKGMLKCSVCNFSNWKSKLIPNCGHAFCSNCMEPFYEHKTSTCPQCETPFSVSDILTIHL</sequence>
<protein>
    <recommendedName>
        <fullName>E3 ubiquitin-protein ligase brl1</fullName>
        <ecNumber evidence="6">2.3.2.27</ecNumber>
    </recommendedName>
    <alternativeName>
        <fullName>BRE1-like protein 1</fullName>
    </alternativeName>
    <alternativeName>
        <fullName>RING finger protein 2</fullName>
    </alternativeName>
    <alternativeName>
        <fullName evidence="6">RING-type E3 ubiquitin transferase brl1</fullName>
    </alternativeName>
</protein>
<keyword id="KW-0156">Chromatin regulator</keyword>
<keyword id="KW-0175">Coiled coil</keyword>
<keyword id="KW-0479">Metal-binding</keyword>
<keyword id="KW-0539">Nucleus</keyword>
<keyword id="KW-1185">Reference proteome</keyword>
<keyword id="KW-0808">Transferase</keyword>
<keyword id="KW-0833">Ubl conjugation pathway</keyword>
<keyword id="KW-0862">Zinc</keyword>
<keyword id="KW-0863">Zinc-finger</keyword>
<evidence type="ECO:0000255" key="1"/>
<evidence type="ECO:0000255" key="2">
    <source>
        <dbReference type="PROSITE-ProRule" id="PRU00175"/>
    </source>
</evidence>
<evidence type="ECO:0000269" key="3">
    <source>
    </source>
</evidence>
<evidence type="ECO:0000269" key="4">
    <source>
    </source>
</evidence>
<evidence type="ECO:0000269" key="5">
    <source>
    </source>
</evidence>
<evidence type="ECO:0000305" key="6"/>
<accession>Q1MTQ0</accession>
<dbReference type="EC" id="2.3.2.27" evidence="6"/>
<dbReference type="EMBL" id="CU329672">
    <property type="protein sequence ID" value="CAA22646.1"/>
    <property type="molecule type" value="Genomic_DNA"/>
</dbReference>
<dbReference type="RefSeq" id="NP_588497.1">
    <property type="nucleotide sequence ID" value="NM_001023487.2"/>
</dbReference>
<dbReference type="SMR" id="Q1MTQ0"/>
<dbReference type="BioGRID" id="275674">
    <property type="interactions" value="11"/>
</dbReference>
<dbReference type="ComplexPortal" id="CPX-10330">
    <property type="entry name" value="Histone H2B ubiquitin ligase complex"/>
</dbReference>
<dbReference type="FunCoup" id="Q1MTQ0">
    <property type="interactions" value="14"/>
</dbReference>
<dbReference type="IntAct" id="Q1MTQ0">
    <property type="interactions" value="2"/>
</dbReference>
<dbReference type="STRING" id="284812.Q1MTQ0"/>
<dbReference type="iPTMnet" id="Q1MTQ0"/>
<dbReference type="PaxDb" id="4896-SPCC1919.15.1"/>
<dbReference type="EnsemblFungi" id="SPCC1919.15.1">
    <property type="protein sequence ID" value="SPCC1919.15.1:pep"/>
    <property type="gene ID" value="SPCC1919.15"/>
</dbReference>
<dbReference type="GeneID" id="2539102"/>
<dbReference type="KEGG" id="spo:2539102"/>
<dbReference type="PomBase" id="SPCC1919.15">
    <property type="gene designation" value="brl1"/>
</dbReference>
<dbReference type="VEuPathDB" id="FungiDB:SPCC1919.15"/>
<dbReference type="eggNOG" id="KOG0978">
    <property type="taxonomic scope" value="Eukaryota"/>
</dbReference>
<dbReference type="HOGENOM" id="CLU_407184_0_0_1"/>
<dbReference type="InParanoid" id="Q1MTQ0"/>
<dbReference type="OMA" id="WRREREY"/>
<dbReference type="PhylomeDB" id="Q1MTQ0"/>
<dbReference type="UniPathway" id="UPA00143"/>
<dbReference type="PRO" id="PR:Q1MTQ0"/>
<dbReference type="Proteomes" id="UP000002485">
    <property type="component" value="Chromosome III"/>
</dbReference>
<dbReference type="GO" id="GO:0033503">
    <property type="term" value="C:HULC complex"/>
    <property type="evidence" value="ECO:0000314"/>
    <property type="project" value="PomBase"/>
</dbReference>
<dbReference type="GO" id="GO:0005634">
    <property type="term" value="C:nucleus"/>
    <property type="evidence" value="ECO:0007005"/>
    <property type="project" value="PomBase"/>
</dbReference>
<dbReference type="GO" id="GO:0140850">
    <property type="term" value="F:histone H2B C-terminal K residue ubiquitin ligase activity"/>
    <property type="evidence" value="ECO:0000314"/>
    <property type="project" value="PomBase"/>
</dbReference>
<dbReference type="GO" id="GO:0061630">
    <property type="term" value="F:ubiquitin protein ligase activity"/>
    <property type="evidence" value="ECO:0000318"/>
    <property type="project" value="GO_Central"/>
</dbReference>
<dbReference type="GO" id="GO:0008270">
    <property type="term" value="F:zinc ion binding"/>
    <property type="evidence" value="ECO:0000255"/>
    <property type="project" value="PomBase"/>
</dbReference>
<dbReference type="GO" id="GO:0040029">
    <property type="term" value="P:epigenetic regulation of gene expression"/>
    <property type="evidence" value="ECO:0000315"/>
    <property type="project" value="PomBase"/>
</dbReference>
<dbReference type="GO" id="GO:0016567">
    <property type="term" value="P:protein ubiquitination"/>
    <property type="evidence" value="ECO:0007669"/>
    <property type="project" value="UniProtKB-UniPathway"/>
</dbReference>
<dbReference type="GO" id="GO:0140673">
    <property type="term" value="P:transcription elongation-coupled chromatin remodeling"/>
    <property type="evidence" value="ECO:0000304"/>
    <property type="project" value="PomBase"/>
</dbReference>
<dbReference type="Gene3D" id="3.30.40.10">
    <property type="entry name" value="Zinc/RING finger domain, C3HC4 (zinc finger)"/>
    <property type="match status" value="1"/>
</dbReference>
<dbReference type="InterPro" id="IPR013956">
    <property type="entry name" value="E3_ubiquit_lig_Bre1"/>
</dbReference>
<dbReference type="InterPro" id="IPR018957">
    <property type="entry name" value="Znf_C3HC4_RING-type"/>
</dbReference>
<dbReference type="InterPro" id="IPR001841">
    <property type="entry name" value="Znf_RING"/>
</dbReference>
<dbReference type="InterPro" id="IPR013083">
    <property type="entry name" value="Znf_RING/FYVE/PHD"/>
</dbReference>
<dbReference type="InterPro" id="IPR017907">
    <property type="entry name" value="Znf_RING_CS"/>
</dbReference>
<dbReference type="PANTHER" id="PTHR23163:SF6">
    <property type="entry name" value="E3 UBIQUITIN-PROTEIN LIGASE BRL1"/>
    <property type="match status" value="1"/>
</dbReference>
<dbReference type="PANTHER" id="PTHR23163">
    <property type="entry name" value="RING FINGER PROTEIN-RELATED"/>
    <property type="match status" value="1"/>
</dbReference>
<dbReference type="Pfam" id="PF08647">
    <property type="entry name" value="BRE1"/>
    <property type="match status" value="1"/>
</dbReference>
<dbReference type="Pfam" id="PF00097">
    <property type="entry name" value="zf-C3HC4"/>
    <property type="match status" value="1"/>
</dbReference>
<dbReference type="SMART" id="SM00184">
    <property type="entry name" value="RING"/>
    <property type="match status" value="1"/>
</dbReference>
<dbReference type="SUPFAM" id="SSF57850">
    <property type="entry name" value="RING/U-box"/>
    <property type="match status" value="1"/>
</dbReference>
<dbReference type="PROSITE" id="PS00518">
    <property type="entry name" value="ZF_RING_1"/>
    <property type="match status" value="1"/>
</dbReference>
<dbReference type="PROSITE" id="PS50089">
    <property type="entry name" value="ZF_RING_2"/>
    <property type="match status" value="1"/>
</dbReference>
<gene>
    <name type="primary">brl1</name>
    <name type="synonym">rfp2</name>
    <name type="ORF">SPCC1919.15</name>
    <name type="ORF">SPCC790.01</name>
</gene>